<keyword id="KW-0963">Cytoplasm</keyword>
<keyword id="KW-0444">Lipid biosynthesis</keyword>
<keyword id="KW-0443">Lipid metabolism</keyword>
<keyword id="KW-0594">Phospholipid biosynthesis</keyword>
<keyword id="KW-1208">Phospholipid metabolism</keyword>
<keyword id="KW-0808">Transferase</keyword>
<accession>Q8P317</accession>
<gene>
    <name evidence="1" type="primary">plsX</name>
    <name type="ordered locus">spyM18_0023</name>
</gene>
<protein>
    <recommendedName>
        <fullName evidence="1">Phosphate acyltransferase</fullName>
        <ecNumber evidence="1">2.3.1.274</ecNumber>
    </recommendedName>
    <alternativeName>
        <fullName evidence="1">Acyl-ACP phosphotransacylase</fullName>
    </alternativeName>
    <alternativeName>
        <fullName evidence="1">Acyl-[acyl-carrier-protein]--phosphate acyltransferase</fullName>
    </alternativeName>
    <alternativeName>
        <fullName evidence="1">Phosphate-acyl-ACP acyltransferase</fullName>
    </alternativeName>
</protein>
<evidence type="ECO:0000255" key="1">
    <source>
        <dbReference type="HAMAP-Rule" id="MF_00019"/>
    </source>
</evidence>
<feature type="chain" id="PRO_0000189951" description="Phosphate acyltransferase">
    <location>
        <begin position="1"/>
        <end position="335"/>
    </location>
</feature>
<sequence>MKRIAIDAMGGDNAPKAIVEGVNQAIEAFSDIEIQLYGDQTKINSYLIQSDRVAIIHTDEKIMSDDEPAKAVRRKKKASMVLAAKAVKEGKADAIISAGNTGVLLAVGLFVVGRIKGVDRPGLLSTIPTVTGLGFDMLDLGANAENTAKHLHQYAILGSFYAKNVRGIANPRVGLLNNGTEETKGDPLRKATYELLTADNTISFVGNVEARELMSGVADVIVSDGFTGNAVLKSIEGTAISIMGQLKQIINSGGIKTKIGASLLKSSLYEMKKTLDYSSAGGAVLFGLKAPVVKSHGSSDVKAIFSTIKQVRTMLDTNVVGQLVEEFAKETQVND</sequence>
<dbReference type="EC" id="2.3.1.274" evidence="1"/>
<dbReference type="EMBL" id="AE009949">
    <property type="protein sequence ID" value="AAL96852.1"/>
    <property type="molecule type" value="Genomic_DNA"/>
</dbReference>
<dbReference type="RefSeq" id="WP_011017227.1">
    <property type="nucleotide sequence ID" value="NC_003485.1"/>
</dbReference>
<dbReference type="SMR" id="Q8P317"/>
<dbReference type="KEGG" id="spm:spyM18_0023"/>
<dbReference type="HOGENOM" id="CLU_039379_1_1_9"/>
<dbReference type="UniPathway" id="UPA00085"/>
<dbReference type="GO" id="GO:0005737">
    <property type="term" value="C:cytoplasm"/>
    <property type="evidence" value="ECO:0007669"/>
    <property type="project" value="UniProtKB-SubCell"/>
</dbReference>
<dbReference type="GO" id="GO:0043811">
    <property type="term" value="F:phosphate:acyl-[acyl carrier protein] acyltransferase activity"/>
    <property type="evidence" value="ECO:0007669"/>
    <property type="project" value="UniProtKB-UniRule"/>
</dbReference>
<dbReference type="GO" id="GO:0006633">
    <property type="term" value="P:fatty acid biosynthetic process"/>
    <property type="evidence" value="ECO:0007669"/>
    <property type="project" value="UniProtKB-UniRule"/>
</dbReference>
<dbReference type="GO" id="GO:0008654">
    <property type="term" value="P:phospholipid biosynthetic process"/>
    <property type="evidence" value="ECO:0007669"/>
    <property type="project" value="UniProtKB-KW"/>
</dbReference>
<dbReference type="Gene3D" id="3.40.718.10">
    <property type="entry name" value="Isopropylmalate Dehydrogenase"/>
    <property type="match status" value="1"/>
</dbReference>
<dbReference type="HAMAP" id="MF_00019">
    <property type="entry name" value="PlsX"/>
    <property type="match status" value="1"/>
</dbReference>
<dbReference type="InterPro" id="IPR003664">
    <property type="entry name" value="FA_synthesis"/>
</dbReference>
<dbReference type="InterPro" id="IPR012281">
    <property type="entry name" value="Phospholipid_synth_PlsX-like"/>
</dbReference>
<dbReference type="NCBIfam" id="TIGR00182">
    <property type="entry name" value="plsX"/>
    <property type="match status" value="1"/>
</dbReference>
<dbReference type="PANTHER" id="PTHR30100">
    <property type="entry name" value="FATTY ACID/PHOSPHOLIPID SYNTHESIS PROTEIN PLSX"/>
    <property type="match status" value="1"/>
</dbReference>
<dbReference type="PANTHER" id="PTHR30100:SF1">
    <property type="entry name" value="PHOSPHATE ACYLTRANSFERASE"/>
    <property type="match status" value="1"/>
</dbReference>
<dbReference type="Pfam" id="PF02504">
    <property type="entry name" value="FA_synthesis"/>
    <property type="match status" value="1"/>
</dbReference>
<dbReference type="PIRSF" id="PIRSF002465">
    <property type="entry name" value="Phsphlp_syn_PlsX"/>
    <property type="match status" value="1"/>
</dbReference>
<dbReference type="SUPFAM" id="SSF53659">
    <property type="entry name" value="Isocitrate/Isopropylmalate dehydrogenase-like"/>
    <property type="match status" value="1"/>
</dbReference>
<name>PLSX_STRP8</name>
<comment type="function">
    <text evidence="1">Catalyzes the reversible formation of acyl-phosphate (acyl-PO(4)) from acyl-[acyl-carrier-protein] (acyl-ACP). This enzyme utilizes acyl-ACP as fatty acyl donor, but not acyl-CoA.</text>
</comment>
<comment type="catalytic activity">
    <reaction evidence="1">
        <text>a fatty acyl-[ACP] + phosphate = an acyl phosphate + holo-[ACP]</text>
        <dbReference type="Rhea" id="RHEA:42292"/>
        <dbReference type="Rhea" id="RHEA-COMP:9685"/>
        <dbReference type="Rhea" id="RHEA-COMP:14125"/>
        <dbReference type="ChEBI" id="CHEBI:43474"/>
        <dbReference type="ChEBI" id="CHEBI:59918"/>
        <dbReference type="ChEBI" id="CHEBI:64479"/>
        <dbReference type="ChEBI" id="CHEBI:138651"/>
        <dbReference type="EC" id="2.3.1.274"/>
    </reaction>
</comment>
<comment type="pathway">
    <text evidence="1">Lipid metabolism; phospholipid metabolism.</text>
</comment>
<comment type="subunit">
    <text evidence="1">Homodimer. Probably interacts with PlsY.</text>
</comment>
<comment type="subcellular location">
    <subcellularLocation>
        <location evidence="1">Cytoplasm</location>
    </subcellularLocation>
    <text evidence="1">Associated with the membrane possibly through PlsY.</text>
</comment>
<comment type="similarity">
    <text evidence="1">Belongs to the PlsX family.</text>
</comment>
<reference key="1">
    <citation type="journal article" date="2002" name="Proc. Natl. Acad. Sci. U.S.A.">
        <title>Genome sequence and comparative microarray analysis of serotype M18 group A Streptococcus strains associated with acute rheumatic fever outbreaks.</title>
        <authorList>
            <person name="Smoot J.C."/>
            <person name="Barbian K.D."/>
            <person name="Van Gompel J.J."/>
            <person name="Smoot L.M."/>
            <person name="Chaussee M.S."/>
            <person name="Sylva G.L."/>
            <person name="Sturdevant D.E."/>
            <person name="Ricklefs S.M."/>
            <person name="Porcella S.F."/>
            <person name="Parkins L.D."/>
            <person name="Beres S.B."/>
            <person name="Campbell D.S."/>
            <person name="Smith T.M."/>
            <person name="Zhang Q."/>
            <person name="Kapur V."/>
            <person name="Daly J.A."/>
            <person name="Veasy L.G."/>
            <person name="Musser J.M."/>
        </authorList>
    </citation>
    <scope>NUCLEOTIDE SEQUENCE [LARGE SCALE GENOMIC DNA]</scope>
    <source>
        <strain>MGAS8232</strain>
    </source>
</reference>
<proteinExistence type="inferred from homology"/>
<organism>
    <name type="scientific">Streptococcus pyogenes serotype M18 (strain MGAS8232)</name>
    <dbReference type="NCBI Taxonomy" id="186103"/>
    <lineage>
        <taxon>Bacteria</taxon>
        <taxon>Bacillati</taxon>
        <taxon>Bacillota</taxon>
        <taxon>Bacilli</taxon>
        <taxon>Lactobacillales</taxon>
        <taxon>Streptococcaceae</taxon>
        <taxon>Streptococcus</taxon>
    </lineage>
</organism>